<reference key="1">
    <citation type="journal article" date="2005" name="Nucleic Acids Res.">
        <title>Genome dynamics and diversity of Shigella species, the etiologic agents of bacillary dysentery.</title>
        <authorList>
            <person name="Yang F."/>
            <person name="Yang J."/>
            <person name="Zhang X."/>
            <person name="Chen L."/>
            <person name="Jiang Y."/>
            <person name="Yan Y."/>
            <person name="Tang X."/>
            <person name="Wang J."/>
            <person name="Xiong Z."/>
            <person name="Dong J."/>
            <person name="Xue Y."/>
            <person name="Zhu Y."/>
            <person name="Xu X."/>
            <person name="Sun L."/>
            <person name="Chen S."/>
            <person name="Nie H."/>
            <person name="Peng J."/>
            <person name="Xu J."/>
            <person name="Wang Y."/>
            <person name="Yuan Z."/>
            <person name="Wen Y."/>
            <person name="Yao Z."/>
            <person name="Shen Y."/>
            <person name="Qiang B."/>
            <person name="Hou Y."/>
            <person name="Yu J."/>
            <person name="Jin Q."/>
        </authorList>
    </citation>
    <scope>NUCLEOTIDE SEQUENCE [LARGE SCALE GENOMIC DNA]</scope>
    <source>
        <strain>Sb227</strain>
    </source>
</reference>
<accession>Q31XB4</accession>
<gene>
    <name evidence="1" type="primary">cysD</name>
    <name type="ordered locus">SBO_2768</name>
</gene>
<sequence>MAQKRLTHLRQLEAESIHIIREVAAEFSNPVMLYSIGKDSSVMLHLARKAFYPGTLPFPLLHVDTGWKFREMYEFRDRTAKAYGCELLVHKNPEGVAMGINPFVHGSAKHTDIMKTEGLKQALNKYGFDAAFGGARRDEEKSRAKERIYSFRDRFHRWDPKNQRPELWHNYNGQINKGESIRVFPLSNWTEQDIWQYIWLENIDIVPLYLAAERPVLERDGMLMMIDDNRIDLQPGEVIKKRMVRFRTLGCWPLTGAVESNAQTLPEIIEEMLVSTTSERQGRVIDRDQAGSMELKKRQGYF</sequence>
<comment type="function">
    <text evidence="1">With CysN forms the ATP sulfurylase (ATPS) that catalyzes the adenylation of sulfate producing adenosine 5'-phosphosulfate (APS) and diphosphate, the first enzymatic step in sulfur assimilation pathway. APS synthesis involves the formation of a high-energy phosphoric-sulfuric acid anhydride bond driven by GTP hydrolysis by CysN coupled to ATP hydrolysis by CysD.</text>
</comment>
<comment type="catalytic activity">
    <reaction evidence="1">
        <text>sulfate + ATP + H(+) = adenosine 5'-phosphosulfate + diphosphate</text>
        <dbReference type="Rhea" id="RHEA:18133"/>
        <dbReference type="ChEBI" id="CHEBI:15378"/>
        <dbReference type="ChEBI" id="CHEBI:16189"/>
        <dbReference type="ChEBI" id="CHEBI:30616"/>
        <dbReference type="ChEBI" id="CHEBI:33019"/>
        <dbReference type="ChEBI" id="CHEBI:58243"/>
        <dbReference type="EC" id="2.7.7.4"/>
    </reaction>
</comment>
<comment type="pathway">
    <text evidence="1">Sulfur metabolism; hydrogen sulfide biosynthesis; sulfite from sulfate: step 1/3.</text>
</comment>
<comment type="subunit">
    <text evidence="1">Heterodimer composed of CysD, the smaller subunit, and CysN.</text>
</comment>
<comment type="similarity">
    <text evidence="1">Belongs to the PAPS reductase family. CysD subfamily.</text>
</comment>
<organism>
    <name type="scientific">Shigella boydii serotype 4 (strain Sb227)</name>
    <dbReference type="NCBI Taxonomy" id="300268"/>
    <lineage>
        <taxon>Bacteria</taxon>
        <taxon>Pseudomonadati</taxon>
        <taxon>Pseudomonadota</taxon>
        <taxon>Gammaproteobacteria</taxon>
        <taxon>Enterobacterales</taxon>
        <taxon>Enterobacteriaceae</taxon>
        <taxon>Shigella</taxon>
    </lineage>
</organism>
<proteinExistence type="inferred from homology"/>
<protein>
    <recommendedName>
        <fullName evidence="1">Sulfate adenylyltransferase subunit 2</fullName>
        <ecNumber evidence="1">2.7.7.4</ecNumber>
    </recommendedName>
    <alternativeName>
        <fullName evidence="1">ATP-sulfurylase small subunit</fullName>
    </alternativeName>
    <alternativeName>
        <fullName evidence="1">Sulfate adenylate transferase</fullName>
        <shortName evidence="1">SAT</shortName>
    </alternativeName>
</protein>
<keyword id="KW-0067">ATP-binding</keyword>
<keyword id="KW-0547">Nucleotide-binding</keyword>
<keyword id="KW-0548">Nucleotidyltransferase</keyword>
<keyword id="KW-0808">Transferase</keyword>
<feature type="chain" id="PRO_1000008993" description="Sulfate adenylyltransferase subunit 2">
    <location>
        <begin position="1"/>
        <end position="302"/>
    </location>
</feature>
<name>CYSD_SHIBS</name>
<dbReference type="EC" id="2.7.7.4" evidence="1"/>
<dbReference type="EMBL" id="CP000036">
    <property type="protein sequence ID" value="ABB67294.1"/>
    <property type="molecule type" value="Genomic_DNA"/>
</dbReference>
<dbReference type="RefSeq" id="WP_000057623.1">
    <property type="nucleotide sequence ID" value="NC_007613.1"/>
</dbReference>
<dbReference type="SMR" id="Q31XB4"/>
<dbReference type="KEGG" id="sbo:SBO_2768"/>
<dbReference type="HOGENOM" id="CLU_043026_0_0_6"/>
<dbReference type="UniPathway" id="UPA00140">
    <property type="reaction ID" value="UER00204"/>
</dbReference>
<dbReference type="Proteomes" id="UP000007067">
    <property type="component" value="Chromosome"/>
</dbReference>
<dbReference type="GO" id="GO:0005524">
    <property type="term" value="F:ATP binding"/>
    <property type="evidence" value="ECO:0007669"/>
    <property type="project" value="UniProtKB-KW"/>
</dbReference>
<dbReference type="GO" id="GO:0004781">
    <property type="term" value="F:sulfate adenylyltransferase (ATP) activity"/>
    <property type="evidence" value="ECO:0007669"/>
    <property type="project" value="UniProtKB-UniRule"/>
</dbReference>
<dbReference type="GO" id="GO:0070814">
    <property type="term" value="P:hydrogen sulfide biosynthetic process"/>
    <property type="evidence" value="ECO:0007669"/>
    <property type="project" value="UniProtKB-UniRule"/>
</dbReference>
<dbReference type="GO" id="GO:0000103">
    <property type="term" value="P:sulfate assimilation"/>
    <property type="evidence" value="ECO:0007669"/>
    <property type="project" value="UniProtKB-UniRule"/>
</dbReference>
<dbReference type="CDD" id="cd23946">
    <property type="entry name" value="Sulfate_adenylyltransferase_2"/>
    <property type="match status" value="1"/>
</dbReference>
<dbReference type="FunFam" id="3.40.50.620:FF:000002">
    <property type="entry name" value="Sulfate adenylyltransferase subunit 2"/>
    <property type="match status" value="1"/>
</dbReference>
<dbReference type="Gene3D" id="3.40.50.620">
    <property type="entry name" value="HUPs"/>
    <property type="match status" value="1"/>
</dbReference>
<dbReference type="HAMAP" id="MF_00064">
    <property type="entry name" value="Sulf_adenylyltr_sub2"/>
    <property type="match status" value="1"/>
</dbReference>
<dbReference type="InterPro" id="IPR002500">
    <property type="entry name" value="PAPS_reduct_dom"/>
</dbReference>
<dbReference type="InterPro" id="IPR014729">
    <property type="entry name" value="Rossmann-like_a/b/a_fold"/>
</dbReference>
<dbReference type="InterPro" id="IPR011784">
    <property type="entry name" value="SO4_adenylTrfase_ssu"/>
</dbReference>
<dbReference type="InterPro" id="IPR050128">
    <property type="entry name" value="Sulfate_adenylyltrnsfr_sub2"/>
</dbReference>
<dbReference type="NCBIfam" id="TIGR02039">
    <property type="entry name" value="CysD"/>
    <property type="match status" value="1"/>
</dbReference>
<dbReference type="NCBIfam" id="NF003587">
    <property type="entry name" value="PRK05253.1"/>
    <property type="match status" value="1"/>
</dbReference>
<dbReference type="NCBIfam" id="NF009214">
    <property type="entry name" value="PRK12563.1"/>
    <property type="match status" value="1"/>
</dbReference>
<dbReference type="PANTHER" id="PTHR43196">
    <property type="entry name" value="SULFATE ADENYLYLTRANSFERASE SUBUNIT 2"/>
    <property type="match status" value="1"/>
</dbReference>
<dbReference type="PANTHER" id="PTHR43196:SF1">
    <property type="entry name" value="SULFATE ADENYLYLTRANSFERASE SUBUNIT 2"/>
    <property type="match status" value="1"/>
</dbReference>
<dbReference type="Pfam" id="PF01507">
    <property type="entry name" value="PAPS_reduct"/>
    <property type="match status" value="1"/>
</dbReference>
<dbReference type="PIRSF" id="PIRSF002936">
    <property type="entry name" value="CysDAde_trans"/>
    <property type="match status" value="1"/>
</dbReference>
<dbReference type="SUPFAM" id="SSF52402">
    <property type="entry name" value="Adenine nucleotide alpha hydrolases-like"/>
    <property type="match status" value="1"/>
</dbReference>
<evidence type="ECO:0000255" key="1">
    <source>
        <dbReference type="HAMAP-Rule" id="MF_00064"/>
    </source>
</evidence>